<sequence length="161" mass="17906">MKKWLLAAGLGLAMVTSAQAADKIAIVNMGNLFQQVAQKTGVSNTLENEFKGRAAELQKMETDLQSKMQRLQSMKAGSDRTKLEKDVMSQRQTFAQKAQAFEKDRARRSNEERNKLVTRIQTAVKKVANDQSIDLVVDANTVAYNSSDVKDITADVLKQVK</sequence>
<evidence type="ECO:0000250" key="1"/>
<evidence type="ECO:0000255" key="2"/>
<evidence type="ECO:0000269" key="3">
    <source>
    </source>
</evidence>
<evidence type="ECO:0000305" key="4"/>
<evidence type="ECO:0000305" key="5">
    <source>
    </source>
</evidence>
<reference key="1">
    <citation type="journal article" date="1989" name="J. Biol. Chem.">
        <title>Isolation, cloning, and primary structure of a cationic 16-kDa outer membrane protein of Salmonella typhimurium.</title>
        <authorList>
            <person name="Koski P."/>
            <person name="Rheen M."/>
            <person name="Kantele J."/>
            <person name="Vaara M."/>
        </authorList>
    </citation>
    <scope>NUCLEOTIDE SEQUENCE [GENOMIC DNA]</scope>
    <scope>PROTEIN SEQUENCE OF 21-30</scope>
</reference>
<reference key="2">
    <citation type="journal article" date="1990" name="Gene">
        <title>Complete sequence of the ompH gene encoding the 16-kDa cationic outer membrane protein of Salmonella typhimurium.</title>
        <authorList>
            <person name="Koski P."/>
            <person name="Hirvas L."/>
            <person name="Vaara M."/>
        </authorList>
    </citation>
    <scope>NUCLEOTIDE SEQUENCE [GENOMIC DNA]</scope>
</reference>
<reference key="3">
    <citation type="journal article" date="2001" name="Nature">
        <title>Complete genome sequence of Salmonella enterica serovar Typhimurium LT2.</title>
        <authorList>
            <person name="McClelland M."/>
            <person name="Sanderson K.E."/>
            <person name="Spieth J."/>
            <person name="Clifton S.W."/>
            <person name="Latreille P."/>
            <person name="Courtney L."/>
            <person name="Porwollik S."/>
            <person name="Ali J."/>
            <person name="Dante M."/>
            <person name="Du F."/>
            <person name="Hou S."/>
            <person name="Layman D."/>
            <person name="Leonard S."/>
            <person name="Nguyen C."/>
            <person name="Scott K."/>
            <person name="Holmes A."/>
            <person name="Grewal N."/>
            <person name="Mulvaney E."/>
            <person name="Ryan E."/>
            <person name="Sun H."/>
            <person name="Florea L."/>
            <person name="Miller W."/>
            <person name="Stoneking T."/>
            <person name="Nhan M."/>
            <person name="Waterston R."/>
            <person name="Wilson R.K."/>
        </authorList>
    </citation>
    <scope>NUCLEOTIDE SEQUENCE [LARGE SCALE GENOMIC DNA]</scope>
    <source>
        <strain>LT2 / SGSC1412 / ATCC 700720</strain>
    </source>
</reference>
<reference key="4">
    <citation type="journal article" date="1990" name="Biochem. Biophys. Res. Commun.">
        <title>Primary structure and expression of the Ssc-protein of Salmonella typhimurium.</title>
        <authorList>
            <person name="Hirvas L."/>
            <person name="Koski P."/>
            <person name="Vaara M."/>
        </authorList>
    </citation>
    <scope>NUCLEOTIDE SEQUENCE [GENOMIC DNA] OF 98-161</scope>
</reference>
<reference key="5">
    <citation type="journal article" date="1990" name="FEBS Lett.">
        <title>Bacterial 'histone-like protein I' (HLP-I) is an outer membrane constituent?</title>
        <authorList>
            <person name="Hirvas L."/>
            <person name="Coleman J."/>
            <person name="Koski P."/>
            <person name="Vaara M."/>
        </authorList>
    </citation>
    <scope>SIMILARITY TO E.COLI SKP</scope>
</reference>
<organism>
    <name type="scientific">Salmonella typhimurium (strain LT2 / SGSC1412 / ATCC 700720)</name>
    <dbReference type="NCBI Taxonomy" id="99287"/>
    <lineage>
        <taxon>Bacteria</taxon>
        <taxon>Pseudomonadati</taxon>
        <taxon>Pseudomonadota</taxon>
        <taxon>Gammaproteobacteria</taxon>
        <taxon>Enterobacterales</taxon>
        <taxon>Enterobacteriaceae</taxon>
        <taxon>Salmonella</taxon>
    </lineage>
</organism>
<proteinExistence type="evidence at protein level"/>
<comment type="function">
    <text evidence="1">Molecular chaperone that interacts specifically with outer membrane proteins, thus maintaining the solubility of early folding intermediates during passage through the periplasm.</text>
</comment>
<comment type="subunit">
    <text evidence="1">Homotrimer.</text>
</comment>
<comment type="subcellular location">
    <subcellularLocation>
        <location evidence="1">Periplasm</location>
    </subcellularLocation>
</comment>
<comment type="similarity">
    <text evidence="4">Belongs to the Skp family.</text>
</comment>
<comment type="caution">
    <text evidence="5">Has been reported to be located in the outer membrane.</text>
</comment>
<feature type="signal peptide" evidence="3">
    <location>
        <begin position="1"/>
        <end position="20"/>
    </location>
</feature>
<feature type="chain" id="PRO_0000020178" description="Chaperone protein Skp">
    <location>
        <begin position="21"/>
        <end position="161"/>
    </location>
</feature>
<feature type="region of interest" description="Lipopolysaccharide binding" evidence="2">
    <location>
        <begin position="97"/>
        <end position="108"/>
    </location>
</feature>
<accession>P0A1Z2</accession>
<accession>P16974</accession>
<name>SKP_SALTY</name>
<protein>
    <recommendedName>
        <fullName>Chaperone protein Skp</fullName>
    </recommendedName>
    <alternativeName>
        <fullName>Cationic 16 kDa outer membrane protein</fullName>
    </alternativeName>
    <alternativeName>
        <fullName>Outer membrane protein OmpH</fullName>
    </alternativeName>
</protein>
<dbReference type="EMBL" id="J05101">
    <property type="protein sequence ID" value="AAA27170.1"/>
    <property type="molecule type" value="Genomic_DNA"/>
</dbReference>
<dbReference type="EMBL" id="AE006468">
    <property type="protein sequence ID" value="AAL19189.1"/>
    <property type="molecule type" value="Genomic_DNA"/>
</dbReference>
<dbReference type="PIR" id="JQ0528">
    <property type="entry name" value="S09104"/>
</dbReference>
<dbReference type="RefSeq" id="WP_000758966.1">
    <property type="nucleotide sequence ID" value="NC_003197.2"/>
</dbReference>
<dbReference type="SMR" id="P0A1Z2"/>
<dbReference type="STRING" id="99287.STM0225"/>
<dbReference type="PaxDb" id="99287-STM0225"/>
<dbReference type="KEGG" id="stm:STM0225"/>
<dbReference type="PATRIC" id="fig|99287.12.peg.238"/>
<dbReference type="HOGENOM" id="CLU_101388_2_0_6"/>
<dbReference type="OMA" id="MENDLQS"/>
<dbReference type="PhylomeDB" id="P0A1Z2"/>
<dbReference type="BioCyc" id="SENT99287:STM0225-MONOMER"/>
<dbReference type="Proteomes" id="UP000001014">
    <property type="component" value="Chromosome"/>
</dbReference>
<dbReference type="GO" id="GO:0042597">
    <property type="term" value="C:periplasmic space"/>
    <property type="evidence" value="ECO:0007669"/>
    <property type="project" value="UniProtKB-SubCell"/>
</dbReference>
<dbReference type="GO" id="GO:0051082">
    <property type="term" value="F:unfolded protein binding"/>
    <property type="evidence" value="ECO:0007669"/>
    <property type="project" value="InterPro"/>
</dbReference>
<dbReference type="GO" id="GO:0061077">
    <property type="term" value="P:chaperone-mediated protein folding"/>
    <property type="evidence" value="ECO:0000318"/>
    <property type="project" value="GO_Central"/>
</dbReference>
<dbReference type="GO" id="GO:0050821">
    <property type="term" value="P:protein stabilization"/>
    <property type="evidence" value="ECO:0000318"/>
    <property type="project" value="GO_Central"/>
</dbReference>
<dbReference type="FunFam" id="3.30.910.20:FF:000001">
    <property type="entry name" value="Molecular chaperone Skp"/>
    <property type="match status" value="1"/>
</dbReference>
<dbReference type="Gene3D" id="3.30.910.20">
    <property type="entry name" value="Skp domain"/>
    <property type="match status" value="1"/>
</dbReference>
<dbReference type="InterPro" id="IPR005632">
    <property type="entry name" value="Chaperone_Skp"/>
</dbReference>
<dbReference type="InterPro" id="IPR024930">
    <property type="entry name" value="Skp_dom_sf"/>
</dbReference>
<dbReference type="NCBIfam" id="NF008047">
    <property type="entry name" value="PRK10780.1"/>
    <property type="match status" value="1"/>
</dbReference>
<dbReference type="PANTHER" id="PTHR35089">
    <property type="entry name" value="CHAPERONE PROTEIN SKP"/>
    <property type="match status" value="1"/>
</dbReference>
<dbReference type="PANTHER" id="PTHR35089:SF1">
    <property type="entry name" value="CHAPERONE PROTEIN SKP"/>
    <property type="match status" value="1"/>
</dbReference>
<dbReference type="Pfam" id="PF03938">
    <property type="entry name" value="OmpH"/>
    <property type="match status" value="1"/>
</dbReference>
<dbReference type="PIRSF" id="PIRSF002094">
    <property type="entry name" value="OMP26_Skp"/>
    <property type="match status" value="1"/>
</dbReference>
<dbReference type="SMART" id="SM00935">
    <property type="entry name" value="OmpH"/>
    <property type="match status" value="1"/>
</dbReference>
<dbReference type="SUPFAM" id="SSF111384">
    <property type="entry name" value="OmpH-like"/>
    <property type="match status" value="1"/>
</dbReference>
<gene>
    <name type="primary">skp</name>
    <name type="synonym">ompH</name>
    <name type="ordered locus">STM0225</name>
</gene>
<keyword id="KW-0143">Chaperone</keyword>
<keyword id="KW-0903">Direct protein sequencing</keyword>
<keyword id="KW-0574">Periplasm</keyword>
<keyword id="KW-1185">Reference proteome</keyword>
<keyword id="KW-0732">Signal</keyword>